<comment type="function">
    <text evidence="2 3 10 11 12 14">Transcription factor, which has both transcriptional activation and repression activities (PubMed:31905202). Also modulates chromatin accessibility (PubMed:38361031). In complex with HCFC1 and ZNF143, regulates the expression of several genes, including AP2S1, ESCO2, OPHN1, RBL1, UBXN8 and ZNF32 (PubMed:26416877). May regulate the expression of genes that encode both cytoplasmic and mitochondrial ribosomal proteins (By similarity). Required for normal mitochondrial development and function. Regulates mitochondrial gene expression, including that of components of the electron transport chain (By similarity). Involved in the maintainance of pluripotency in early embryonic cells, possibly through its action on mitochondrial maturation which is required to meet high energy demands of these cells (By similarity). Required for early development of retina, preventing premature exit of retinal progenitor cells from the cell cycle. This effect may also be mediated by its action on mitochondria (By similarity). Through the regulation of MMACHC gene expression, controls cobalamin metabolism (PubMed:28449119, PubMed:31905202). Required for normal brain development and neural precursor differentiation (By similarity). Involved in cell growth (PubMed:31905202).</text>
</comment>
<comment type="subunit">
    <text evidence="12 17">Forms homodimers (PubMed:31905202). Interacts via HBM with HCFC1 (PubMed:31905202). Forms a complex with HCFC1 and ZNF143 (Probable).</text>
</comment>
<comment type="interaction">
    <interactant intactId="EBI-1790529">
        <id>Q96EK4</id>
    </interactant>
    <interactant intactId="EBI-908846">
        <id>Q13363</id>
        <label>CTBP1</label>
    </interactant>
    <organismsDiffer>false</organismsDiffer>
    <experiments>4</experiments>
</comment>
<comment type="interaction">
    <interactant intactId="EBI-1790529">
        <id>Q96EK4</id>
    </interactant>
    <interactant intactId="EBI-396176">
        <id>P51610</id>
        <label>HCFC1</label>
    </interactant>
    <organismsDiffer>false</organismsDiffer>
    <experiments>4</experiments>
</comment>
<comment type="interaction">
    <interactant intactId="EBI-1790529">
        <id>Q96EK4</id>
    </interactant>
    <interactant intactId="EBI-946095">
        <id>Q15365</id>
        <label>PCBP1</label>
    </interactant>
    <organismsDiffer>false</organismsDiffer>
    <experiments>4</experiments>
</comment>
<comment type="interaction">
    <interactant intactId="EBI-1790529">
        <id>Q96EK4</id>
    </interactant>
    <interactant intactId="EBI-357745">
        <id>P62195</id>
        <label>PSMC5</label>
    </interactant>
    <organismsDiffer>false</organismsDiffer>
    <experiments>3</experiments>
</comment>
<comment type="interaction">
    <interactant intactId="EBI-1790529">
        <id>Q96EK4</id>
    </interactant>
    <interactant intactId="EBI-2799833">
        <id>Q8N1B4</id>
        <label>VPS52</label>
    </interactant>
    <organismsDiffer>false</organismsDiffer>
    <experiments>3</experiments>
</comment>
<comment type="interaction">
    <interactant intactId="EBI-1790529">
        <id>Q96EK4</id>
    </interactant>
    <interactant intactId="EBI-1790419">
        <id>P70677</id>
        <label>Casp3</label>
    </interactant>
    <organismsDiffer>true</organismsDiffer>
    <experiments>2</experiments>
</comment>
<comment type="subcellular location">
    <subcellularLocation>
        <location evidence="13 15">Nucleus</location>
    </subcellularLocation>
    <subcellularLocation>
        <location evidence="13">Cytoplasm</location>
    </subcellularLocation>
    <text evidence="4 9 13">In oocytes, detected in the ooplasm, without evidence of its presence in the nucleus (By similarity). Found in the nucleus of undifferentiated embryonic stem cells (PubMed:18585351). Evenly distributed between nucleus and cytoplasm in skin fibroblasts (PubMed:37148549).</text>
</comment>
<comment type="tissue specificity">
    <text evidence="13">Expressed in skin fibroblasts.</text>
</comment>
<comment type="polymorphism">
    <text evidence="8 13">The length of the poly-Gln region is variable in the population, ranging from about 20 to 38 repeats.</text>
</comment>
<comment type="disease" evidence="11 12">
    <disease id="DI-06939">
        <name>Methylmalonic aciduria and homocystinuria type cblL</name>
        <acronym>MAHCL</acronym>
        <description>An autosomal recessive disorder of cobalamin metabolism clinically characterized by early-onset seizures, and profound global developmental delay with severe intellectual disability. Metabolic features are mild methylmalonic aciduria, low-normal plasma methionine, and high-normal plasma homocysteine.</description>
        <dbReference type="MIM" id="620940"/>
    </disease>
    <text>The disease is caused by variants affecting the gene represented in this entry.</text>
</comment>
<comment type="disease" evidence="13">
    <disease id="DI-06941">
        <name>Spinocerebellar ataxia 51</name>
        <acronym>SCA51</acronym>
        <description>A form of spinocerebellar ataxia, a clinically and genetically heterogeneous group of cerebellar disorders. Patients show progressive incoordination of gait and often poor coordination of hands, speech and eye movements, due to degeneration of the cerebellum with variable involvement of the brainstem and spinal cord. SCA51 is an autosomal dominant form with age-dependent penetrance and genetic anticipation.</description>
        <dbReference type="MIM" id="620947"/>
    </disease>
    <text evidence="13">The disease is caused by variants affecting the gene represented in this entry. SCA51 is caused by CAG(n) trinucleotide repeat expansions. The expansion associated with ataxia phenotype is over 45 repeats. There is a correlation between the size of the CAG(n) repeat and symptom onset. A patient with onset at 4 years of age showed 100 repeats, whereas patients with 45 to 55 repeats had a disease onset in adulthood. CAG(n) repeat expansion leads to THAP11 protein aggregation in the cytoplasm and decreased cell viability.</text>
</comment>
<comment type="similarity">
    <text evidence="16">Belongs to the THAP11 family.</text>
</comment>
<organism>
    <name type="scientific">Homo sapiens</name>
    <name type="common">Human</name>
    <dbReference type="NCBI Taxonomy" id="9606"/>
    <lineage>
        <taxon>Eukaryota</taxon>
        <taxon>Metazoa</taxon>
        <taxon>Chordata</taxon>
        <taxon>Craniata</taxon>
        <taxon>Vertebrata</taxon>
        <taxon>Euteleostomi</taxon>
        <taxon>Mammalia</taxon>
        <taxon>Eutheria</taxon>
        <taxon>Euarchontoglires</taxon>
        <taxon>Primates</taxon>
        <taxon>Haplorrhini</taxon>
        <taxon>Catarrhini</taxon>
        <taxon>Hominidae</taxon>
        <taxon>Homo</taxon>
    </lineage>
</organism>
<accession>Q96EK4</accession>
<accession>A4UCT5</accession>
<accession>A8K002</accession>
<accession>O94795</accession>
<reference key="1">
    <citation type="journal article" date="2004" name="Nat. Genet.">
        <title>Complete sequencing and characterization of 21,243 full-length human cDNAs.</title>
        <authorList>
            <person name="Ota T."/>
            <person name="Suzuki Y."/>
            <person name="Nishikawa T."/>
            <person name="Otsuki T."/>
            <person name="Sugiyama T."/>
            <person name="Irie R."/>
            <person name="Wakamatsu A."/>
            <person name="Hayashi K."/>
            <person name="Sato H."/>
            <person name="Nagai K."/>
            <person name="Kimura K."/>
            <person name="Makita H."/>
            <person name="Sekine M."/>
            <person name="Obayashi M."/>
            <person name="Nishi T."/>
            <person name="Shibahara T."/>
            <person name="Tanaka T."/>
            <person name="Ishii S."/>
            <person name="Yamamoto J."/>
            <person name="Saito K."/>
            <person name="Kawai Y."/>
            <person name="Isono Y."/>
            <person name="Nakamura Y."/>
            <person name="Nagahari K."/>
            <person name="Murakami K."/>
            <person name="Yasuda T."/>
            <person name="Iwayanagi T."/>
            <person name="Wagatsuma M."/>
            <person name="Shiratori A."/>
            <person name="Sudo H."/>
            <person name="Hosoiri T."/>
            <person name="Kaku Y."/>
            <person name="Kodaira H."/>
            <person name="Kondo H."/>
            <person name="Sugawara M."/>
            <person name="Takahashi M."/>
            <person name="Kanda K."/>
            <person name="Yokoi T."/>
            <person name="Furuya T."/>
            <person name="Kikkawa E."/>
            <person name="Omura Y."/>
            <person name="Abe K."/>
            <person name="Kamihara K."/>
            <person name="Katsuta N."/>
            <person name="Sato K."/>
            <person name="Tanikawa M."/>
            <person name="Yamazaki M."/>
            <person name="Ninomiya K."/>
            <person name="Ishibashi T."/>
            <person name="Yamashita H."/>
            <person name="Murakawa K."/>
            <person name="Fujimori K."/>
            <person name="Tanai H."/>
            <person name="Kimata M."/>
            <person name="Watanabe M."/>
            <person name="Hiraoka S."/>
            <person name="Chiba Y."/>
            <person name="Ishida S."/>
            <person name="Ono Y."/>
            <person name="Takiguchi S."/>
            <person name="Watanabe S."/>
            <person name="Yosida M."/>
            <person name="Hotuta T."/>
            <person name="Kusano J."/>
            <person name="Kanehori K."/>
            <person name="Takahashi-Fujii A."/>
            <person name="Hara H."/>
            <person name="Tanase T.-O."/>
            <person name="Nomura Y."/>
            <person name="Togiya S."/>
            <person name="Komai F."/>
            <person name="Hara R."/>
            <person name="Takeuchi K."/>
            <person name="Arita M."/>
            <person name="Imose N."/>
            <person name="Musashino K."/>
            <person name="Yuuki H."/>
            <person name="Oshima A."/>
            <person name="Sasaki N."/>
            <person name="Aotsuka S."/>
            <person name="Yoshikawa Y."/>
            <person name="Matsunawa H."/>
            <person name="Ichihara T."/>
            <person name="Shiohata N."/>
            <person name="Sano S."/>
            <person name="Moriya S."/>
            <person name="Momiyama H."/>
            <person name="Satoh N."/>
            <person name="Takami S."/>
            <person name="Terashima Y."/>
            <person name="Suzuki O."/>
            <person name="Nakagawa S."/>
            <person name="Senoh A."/>
            <person name="Mizoguchi H."/>
            <person name="Goto Y."/>
            <person name="Shimizu F."/>
            <person name="Wakebe H."/>
            <person name="Hishigaki H."/>
            <person name="Watanabe T."/>
            <person name="Sugiyama A."/>
            <person name="Takemoto M."/>
            <person name="Kawakami B."/>
            <person name="Yamazaki M."/>
            <person name="Watanabe K."/>
            <person name="Kumagai A."/>
            <person name="Itakura S."/>
            <person name="Fukuzumi Y."/>
            <person name="Fujimori Y."/>
            <person name="Komiyama M."/>
            <person name="Tashiro H."/>
            <person name="Tanigami A."/>
            <person name="Fujiwara T."/>
            <person name="Ono T."/>
            <person name="Yamada K."/>
            <person name="Fujii Y."/>
            <person name="Ozaki K."/>
            <person name="Hirao M."/>
            <person name="Ohmori Y."/>
            <person name="Kawabata A."/>
            <person name="Hikiji T."/>
            <person name="Kobatake N."/>
            <person name="Inagaki H."/>
            <person name="Ikema Y."/>
            <person name="Okamoto S."/>
            <person name="Okitani R."/>
            <person name="Kawakami T."/>
            <person name="Noguchi S."/>
            <person name="Itoh T."/>
            <person name="Shigeta K."/>
            <person name="Senba T."/>
            <person name="Matsumura K."/>
            <person name="Nakajima Y."/>
            <person name="Mizuno T."/>
            <person name="Morinaga M."/>
            <person name="Sasaki M."/>
            <person name="Togashi T."/>
            <person name="Oyama M."/>
            <person name="Hata H."/>
            <person name="Watanabe M."/>
            <person name="Komatsu T."/>
            <person name="Mizushima-Sugano J."/>
            <person name="Satoh T."/>
            <person name="Shirai Y."/>
            <person name="Takahashi Y."/>
            <person name="Nakagawa K."/>
            <person name="Okumura K."/>
            <person name="Nagase T."/>
            <person name="Nomura N."/>
            <person name="Kikuchi H."/>
            <person name="Masuho Y."/>
            <person name="Yamashita R."/>
            <person name="Nakai K."/>
            <person name="Yada T."/>
            <person name="Nakamura Y."/>
            <person name="Ohara O."/>
            <person name="Isogai T."/>
            <person name="Sugano S."/>
        </authorList>
    </citation>
    <scope>NUCLEOTIDE SEQUENCE [LARGE SCALE MRNA]</scope>
    <source>
        <tissue>Neuroblastoma</tissue>
    </source>
</reference>
<reference key="2">
    <citation type="journal article" date="2004" name="Genome Res.">
        <title>The status, quality, and expansion of the NIH full-length cDNA project: the Mammalian Gene Collection (MGC).</title>
        <authorList>
            <consortium name="The MGC Project Team"/>
        </authorList>
    </citation>
    <scope>NUCLEOTIDE SEQUENCE [LARGE SCALE MRNA]</scope>
    <source>
        <tissue>Uterus</tissue>
    </source>
</reference>
<reference key="3">
    <citation type="submission" date="2006-10" db="EMBL/GenBank/DDBJ databases">
        <title>Searching for interaction partners of the transcription factor REST/NRSF by two-hybrid screening.</title>
        <authorList>
            <person name="Santana-Roman H."/>
            <person name="Curiel-Quesada E."/>
            <person name="Tapia-Ramirez J."/>
        </authorList>
    </citation>
    <scope>NUCLEOTIDE SEQUENCE [MRNA] OF 44-197</scope>
</reference>
<reference key="4">
    <citation type="journal article" date="1998" name="Nat. Biotechnol.">
        <title>Selection system for genes encoding nuclear-targeted proteins.</title>
        <authorList>
            <person name="Ueki N."/>
            <person name="Oda T."/>
            <person name="Kondo M."/>
            <person name="Yano K."/>
            <person name="Noguchi T."/>
            <person name="Muramatsu M.-A."/>
        </authorList>
    </citation>
    <scope>NUCLEOTIDE SEQUENCE [LARGE SCALE MRNA] OF 226-313</scope>
    <scope>SUBCELLULAR LOCATION</scope>
    <source>
        <tissue>Brain</tissue>
    </source>
</reference>
<reference key="5">
    <citation type="journal article" date="2004" name="J. Hum. Genet.">
        <title>SMARCA2 and THAP11: potential candidates for polyglutamine disorders as evidenced from polymorphism and protein-folding simulation studies.</title>
        <authorList>
            <person name="Pandey N."/>
            <person name="Mittal U."/>
            <person name="Srivastava A.K."/>
            <person name="Mukerji M."/>
        </authorList>
    </citation>
    <scope>TRIPLET REPEAT EXPANSION</scope>
</reference>
<reference key="6">
    <citation type="journal article" date="2008" name="Cell">
        <title>Ronin is essential for embryogenesis and the pluripotency of mouse embryonic stem cells.</title>
        <authorList>
            <person name="Dejosez M."/>
            <person name="Krumenacker J.S."/>
            <person name="Zitur L.J."/>
            <person name="Passeri M."/>
            <person name="Chu L.-F."/>
            <person name="Songyang Z."/>
            <person name="Thomson J.A."/>
            <person name="Zwaka T.P."/>
        </authorList>
    </citation>
    <scope>SUBCELLULAR LOCATION</scope>
</reference>
<reference key="7">
    <citation type="journal article" date="2013" name="J. Biomol. NMR">
        <title>NMR studies of a new family of DNA binding proteins: the THAP proteins.</title>
        <authorList>
            <person name="Gervais V."/>
            <person name="Campagne S."/>
            <person name="Durand J."/>
            <person name="Muller I."/>
            <person name="Milon A."/>
        </authorList>
    </citation>
    <scope>STRUCTURE BY NMR OF 1-81 IN COMPLEX WITH ZINC ION</scope>
    <scope>DNA-BINDING</scope>
</reference>
<reference key="8">
    <citation type="journal article" date="2015" name="Mol. Cell. Biol.">
        <title>Genomic Determinants of THAP11/ZNF143/HCFC1 Complex Recruitment to Chromatin.</title>
        <authorList>
            <person name="Vinckevicius A."/>
            <person name="Parker J.B."/>
            <person name="Chakravarti D."/>
        </authorList>
    </citation>
    <scope>FUNCTION</scope>
    <scope>INTERACTION WITH HCFC1 AND ZNF143</scope>
</reference>
<reference key="9">
    <citation type="journal article" date="2020" name="PLoS ONE">
        <title>THAP11F80L cobalamin disorder-associated mutation reveals normal and pathogenic THAP11 functions in gene expression and cell proliferation.</title>
        <authorList>
            <person name="Dehaene H."/>
            <person name="Praz V."/>
            <person name="Lhote P."/>
            <person name="Lopes M."/>
            <person name="Herr W."/>
        </authorList>
    </citation>
    <scope>INTERACTION WITH HCFC1</scope>
    <scope>HOMODIMERIZATION</scope>
    <scope>CHARACTERIZATION OF VARIANT MAHCL LEU-80</scope>
</reference>
<reference key="10">
    <citation type="journal article" date="2024" name="Nat. Genet.">
        <title>Genome-wide ATAC-see screening identifies TFDP1 as a modulator of global chromatin accessibility.</title>
        <authorList>
            <person name="Ishii S."/>
            <person name="Kakizuka T."/>
            <person name="Park S.J."/>
            <person name="Tagawa A."/>
            <person name="Sanbo C."/>
            <person name="Tanabe H."/>
            <person name="Ohkawa Y."/>
            <person name="Nakanishi M."/>
            <person name="Nakai K."/>
            <person name="Miyanari Y."/>
        </authorList>
    </citation>
    <scope>FUNCTION</scope>
</reference>
<reference key="11">
    <citation type="journal article" date="2017" name="Hum. Mol. Genet.">
        <title>Mutations in THAP11 cause an inborn error of cobalamin metabolism and developmental abnormalities.</title>
        <authorList>
            <person name="Quintana A.M."/>
            <person name="Yu H.C."/>
            <person name="Brebner A."/>
            <person name="Pupavac M."/>
            <person name="Geiger E.A."/>
            <person name="Watson A."/>
            <person name="Castro V.L."/>
            <person name="Cheung W."/>
            <person name="Chen S.H."/>
            <person name="Watkins D."/>
            <person name="Pastinen T."/>
            <person name="Skovby F."/>
            <person name="Appel B."/>
            <person name="Rosenblatt D.S."/>
            <person name="Shaikh T.H."/>
        </authorList>
    </citation>
    <scope>INVOLVEMENT IN MAHCL</scope>
    <scope>VARIANT MAHCL LEU-80</scope>
</reference>
<reference key="12">
    <citation type="journal article" date="2023" name="Mov. Disord.">
        <title>CAG Repeat Expansion in THAP11 Is Associated with a Novel Spinocerebellar Ataxia.</title>
        <authorList>
            <person name="Tan D."/>
            <person name="Wei C."/>
            <person name="Chen Z."/>
            <person name="Huang Y."/>
            <person name="Deng J."/>
            <person name="Li J."/>
            <person name="Liu Y."/>
            <person name="Bao X."/>
            <person name="Xu J."/>
            <person name="Hu Z."/>
            <person name="Wang S."/>
            <person name="Fan Y."/>
            <person name="Jiang Y."/>
            <person name="Wu Y."/>
            <person name="Wu Y."/>
            <person name="Wang S."/>
            <person name="Liu P."/>
            <person name="Zhang Y."/>
            <person name="Yang Z."/>
            <person name="Jiang Y."/>
            <person name="Zhang H."/>
            <person name="Hong D."/>
            <person name="Zhong N."/>
            <person name="Jiang H."/>
            <person name="Xiong H."/>
        </authorList>
    </citation>
    <scope>INVOLVEMENT IN SCA51</scope>
    <scope>SUBCELLULAR LOCATION</scope>
    <scope>TISSUE SPECIFICITY</scope>
</reference>
<feature type="chain" id="PRO_0000068653" description="THAP domain-containing protein 11">
    <location>
        <begin position="1"/>
        <end position="314"/>
    </location>
</feature>
<feature type="zinc finger region" description="THAP-type" evidence="6">
    <location>
        <begin position="1"/>
        <end position="80"/>
    </location>
</feature>
<feature type="region of interest" description="Disordered" evidence="7">
    <location>
        <begin position="85"/>
        <end position="111"/>
    </location>
</feature>
<feature type="coiled-coil region" evidence="5">
    <location>
        <begin position="255"/>
        <end position="305"/>
    </location>
</feature>
<feature type="short sequence motif" description="HCFC1-binding motif (HBM)" evidence="1">
    <location>
        <begin position="243"/>
        <end position="246"/>
    </location>
</feature>
<feature type="compositionally biased region" description="Low complexity" evidence="7">
    <location>
        <begin position="93"/>
        <end position="111"/>
    </location>
</feature>
<feature type="sequence variant" id="VAR_090025" description="In MAHCL; likely pathogenic; promotes a neuronal fate at the expense of neural precursors, when tested in a heterologous system; results in a selective disruption of THAP11 DNA binding at specific promoters in HEK293 cells and does not create novel promoter binding sites; may predominantly affect transcription activation rather than repression, among others strongly decreases MMACHC gene expression; decreased protein, but not transcript, levels; decreases cell proliferation, when tested into HEK293 cell line; dbSNP:rs188675529." evidence="11 12">
    <original>F</original>
    <variation>L</variation>
    <location>
        <position position="80"/>
    </location>
</feature>
<feature type="sequence conflict" description="In Ref. 2; AAH12182." evidence="16" ref="2">
    <location>
        <position position="132"/>
    </location>
</feature>
<feature type="strand" evidence="18">
    <location>
        <begin position="9"/>
        <end position="13"/>
    </location>
</feature>
<feature type="strand" evidence="18">
    <location>
        <begin position="15"/>
        <end position="17"/>
    </location>
</feature>
<feature type="helix" evidence="18">
    <location>
        <begin position="30"/>
        <end position="40"/>
    </location>
</feature>
<feature type="helix" evidence="18">
    <location>
        <begin position="62"/>
        <end position="64"/>
    </location>
</feature>
<feature type="strand" evidence="18">
    <location>
        <begin position="65"/>
        <end position="71"/>
    </location>
</feature>
<feature type="helix" evidence="19">
    <location>
        <begin position="254"/>
        <end position="312"/>
    </location>
</feature>
<sequence length="314" mass="34455">MPGFTCCVPGCYNNSHRDKALHFYTFPKDAELRRLWLKNVSRAGVSGCFSTFQPTTGHRLCSVHFQGGRKTYTVRVPTIFPLRGVNERKVARRPAGAAAARRRQQQQQQQQQQQQQQQQQQQQQQQQQQQQQSSPSASTAQTAQLQPNLVSASAAVLLTLQATVDSSQAPGSVQPAPITPTGEDVKPIDLTVQVEFAAAEGAAAAAAASELQAATAGLEAAECPMGPQLVVVGEEGFPDTGSDHSYSLSSGTTEEELLRKLNEQRDILALMEVKMKEMKGSIRHLRLTEAKLREELREKDRLLAMAVIRKKHGM</sequence>
<keyword id="KW-0002">3D-structure</keyword>
<keyword id="KW-0010">Activator</keyword>
<keyword id="KW-0175">Coiled coil</keyword>
<keyword id="KW-0963">Cytoplasm</keyword>
<keyword id="KW-0225">Disease variant</keyword>
<keyword id="KW-0238">DNA-binding</keyword>
<keyword id="KW-0887">Epilepsy</keyword>
<keyword id="KW-0991">Intellectual disability</keyword>
<keyword id="KW-0479">Metal-binding</keyword>
<keyword id="KW-0523">Neurodegeneration</keyword>
<keyword id="KW-0539">Nucleus</keyword>
<keyword id="KW-1267">Proteomics identification</keyword>
<keyword id="KW-1185">Reference proteome</keyword>
<keyword id="KW-0678">Repressor</keyword>
<keyword id="KW-0950">Spinocerebellar ataxia</keyword>
<keyword id="KW-0804">Transcription</keyword>
<keyword id="KW-0805">Transcription regulation</keyword>
<keyword id="KW-0818">Triplet repeat expansion</keyword>
<keyword id="KW-0862">Zinc</keyword>
<keyword id="KW-0863">Zinc-finger</keyword>
<protein>
    <recommendedName>
        <fullName>THAP domain-containing protein 11</fullName>
    </recommendedName>
</protein>
<evidence type="ECO:0000250" key="1"/>
<evidence type="ECO:0000250" key="2">
    <source>
        <dbReference type="UniProtKB" id="Q61191"/>
    </source>
</evidence>
<evidence type="ECO:0000250" key="3">
    <source>
        <dbReference type="UniProtKB" id="Q6TGZ4"/>
    </source>
</evidence>
<evidence type="ECO:0000250" key="4">
    <source>
        <dbReference type="UniProtKB" id="Q9JJD0"/>
    </source>
</evidence>
<evidence type="ECO:0000255" key="5"/>
<evidence type="ECO:0000255" key="6">
    <source>
        <dbReference type="PROSITE-ProRule" id="PRU00309"/>
    </source>
</evidence>
<evidence type="ECO:0000256" key="7">
    <source>
        <dbReference type="SAM" id="MobiDB-lite"/>
    </source>
</evidence>
<evidence type="ECO:0000269" key="8">
    <source>
    </source>
</evidence>
<evidence type="ECO:0000269" key="9">
    <source>
    </source>
</evidence>
<evidence type="ECO:0000269" key="10">
    <source>
    </source>
</evidence>
<evidence type="ECO:0000269" key="11">
    <source>
    </source>
</evidence>
<evidence type="ECO:0000269" key="12">
    <source>
    </source>
</evidence>
<evidence type="ECO:0000269" key="13">
    <source>
    </source>
</evidence>
<evidence type="ECO:0000269" key="14">
    <source>
    </source>
</evidence>
<evidence type="ECO:0000269" key="15">
    <source>
    </source>
</evidence>
<evidence type="ECO:0000305" key="16"/>
<evidence type="ECO:0000305" key="17">
    <source>
    </source>
</evidence>
<evidence type="ECO:0007829" key="18">
    <source>
        <dbReference type="PDB" id="2LAU"/>
    </source>
</evidence>
<evidence type="ECO:0007829" key="19">
    <source>
        <dbReference type="PDB" id="5AJS"/>
    </source>
</evidence>
<name>THA11_HUMAN</name>
<proteinExistence type="evidence at protein level"/>
<gene>
    <name type="primary">THAP11</name>
    <name type="ORF">HRIHFB2206</name>
</gene>
<dbReference type="EMBL" id="AK289367">
    <property type="protein sequence ID" value="BAF82056.1"/>
    <property type="molecule type" value="mRNA"/>
</dbReference>
<dbReference type="EMBL" id="BC012182">
    <property type="protein sequence ID" value="AAH12182.1"/>
    <property type="molecule type" value="mRNA"/>
</dbReference>
<dbReference type="EMBL" id="EF036502">
    <property type="protein sequence ID" value="ABO65088.1"/>
    <property type="molecule type" value="mRNA"/>
</dbReference>
<dbReference type="EMBL" id="AB015338">
    <property type="protein sequence ID" value="BAA34796.1"/>
    <property type="molecule type" value="mRNA"/>
</dbReference>
<dbReference type="CCDS" id="CCDS10847.1"/>
<dbReference type="RefSeq" id="NP_065190.2">
    <property type="nucleotide sequence ID" value="NM_020457.2"/>
</dbReference>
<dbReference type="PDB" id="2LAU">
    <property type="method" value="NMR"/>
    <property type="chains" value="A=2-80"/>
</dbReference>
<dbReference type="PDB" id="5AJS">
    <property type="method" value="X-ray"/>
    <property type="resolution" value="2.30 A"/>
    <property type="chains" value="A/B/C/D=247-314"/>
</dbReference>
<dbReference type="PDBsum" id="2LAU"/>
<dbReference type="PDBsum" id="5AJS"/>
<dbReference type="BMRB" id="Q96EK4"/>
<dbReference type="SMR" id="Q96EK4"/>
<dbReference type="BioGRID" id="121453">
    <property type="interactions" value="136"/>
</dbReference>
<dbReference type="CORUM" id="Q96EK4"/>
<dbReference type="DIP" id="DIP-46732N"/>
<dbReference type="FunCoup" id="Q96EK4">
    <property type="interactions" value="3824"/>
</dbReference>
<dbReference type="IntAct" id="Q96EK4">
    <property type="interactions" value="90"/>
</dbReference>
<dbReference type="MINT" id="Q96EK4"/>
<dbReference type="STRING" id="9606.ENSP00000304689"/>
<dbReference type="CarbonylDB" id="Q96EK4"/>
<dbReference type="GlyCosmos" id="Q96EK4">
    <property type="glycosylation" value="1 site, 1 glycan"/>
</dbReference>
<dbReference type="GlyGen" id="Q96EK4">
    <property type="glycosylation" value="2 sites, 1 O-linked glycan (1 site)"/>
</dbReference>
<dbReference type="iPTMnet" id="Q96EK4"/>
<dbReference type="PhosphoSitePlus" id="Q96EK4"/>
<dbReference type="BioMuta" id="THAP11"/>
<dbReference type="DMDM" id="209572685"/>
<dbReference type="jPOST" id="Q96EK4"/>
<dbReference type="MassIVE" id="Q96EK4"/>
<dbReference type="PaxDb" id="9606-ENSP00000304689"/>
<dbReference type="PeptideAtlas" id="Q96EK4"/>
<dbReference type="ProteomicsDB" id="76416"/>
<dbReference type="Pumba" id="Q96EK4"/>
<dbReference type="Antibodypedia" id="29649">
    <property type="antibodies" value="283 antibodies from 34 providers"/>
</dbReference>
<dbReference type="DNASU" id="57215"/>
<dbReference type="Ensembl" id="ENST00000303596.3">
    <property type="protein sequence ID" value="ENSP00000304689.1"/>
    <property type="gene ID" value="ENSG00000168286.3"/>
</dbReference>
<dbReference type="GeneID" id="57215"/>
<dbReference type="KEGG" id="hsa:57215"/>
<dbReference type="MANE-Select" id="ENST00000303596.3">
    <property type="protein sequence ID" value="ENSP00000304689.1"/>
    <property type="RefSeq nucleotide sequence ID" value="NM_020457.3"/>
    <property type="RefSeq protein sequence ID" value="NP_065190.2"/>
</dbReference>
<dbReference type="UCSC" id="uc002euo.4">
    <property type="organism name" value="human"/>
</dbReference>
<dbReference type="AGR" id="HGNC:23194"/>
<dbReference type="CTD" id="57215"/>
<dbReference type="DisGeNET" id="57215"/>
<dbReference type="GeneCards" id="THAP11"/>
<dbReference type="GeneReviews" id="THAP11"/>
<dbReference type="HGNC" id="HGNC:23194">
    <property type="gene designation" value="THAP11"/>
</dbReference>
<dbReference type="HPA" id="ENSG00000168286">
    <property type="expression patterns" value="Low tissue specificity"/>
</dbReference>
<dbReference type="MalaCards" id="THAP11"/>
<dbReference type="MIM" id="609119">
    <property type="type" value="gene"/>
</dbReference>
<dbReference type="MIM" id="620940">
    <property type="type" value="phenotype"/>
</dbReference>
<dbReference type="MIM" id="620947">
    <property type="type" value="phenotype"/>
</dbReference>
<dbReference type="neXtProt" id="NX_Q96EK4"/>
<dbReference type="OpenTargets" id="ENSG00000168286"/>
<dbReference type="PharmGKB" id="PA134979842"/>
<dbReference type="VEuPathDB" id="HostDB:ENSG00000168286"/>
<dbReference type="eggNOG" id="ENOG502QQ1Z">
    <property type="taxonomic scope" value="Eukaryota"/>
</dbReference>
<dbReference type="GeneTree" id="ENSGT00390000006585"/>
<dbReference type="HOGENOM" id="CLU_090879_1_0_1"/>
<dbReference type="InParanoid" id="Q96EK4"/>
<dbReference type="OMA" id="GHRVCSI"/>
<dbReference type="OrthoDB" id="8948150at2759"/>
<dbReference type="PAN-GO" id="Q96EK4">
    <property type="GO annotations" value="3 GO annotations based on evolutionary models"/>
</dbReference>
<dbReference type="PhylomeDB" id="Q96EK4"/>
<dbReference type="TreeFam" id="TF331359"/>
<dbReference type="PathwayCommons" id="Q96EK4"/>
<dbReference type="SignaLink" id="Q96EK4"/>
<dbReference type="BioGRID-ORCS" id="57215">
    <property type="hits" value="419 hits in 1193 CRISPR screens"/>
</dbReference>
<dbReference type="EvolutionaryTrace" id="Q96EK4"/>
<dbReference type="GenomeRNAi" id="57215"/>
<dbReference type="Pharos" id="Q96EK4">
    <property type="development level" value="Tbio"/>
</dbReference>
<dbReference type="PRO" id="PR:Q96EK4"/>
<dbReference type="Proteomes" id="UP000005640">
    <property type="component" value="Chromosome 16"/>
</dbReference>
<dbReference type="RNAct" id="Q96EK4">
    <property type="molecule type" value="protein"/>
</dbReference>
<dbReference type="Bgee" id="ENSG00000168286">
    <property type="expression patterns" value="Expressed in amniotic fluid and 206 other cell types or tissues"/>
</dbReference>
<dbReference type="GO" id="GO:0000785">
    <property type="term" value="C:chromatin"/>
    <property type="evidence" value="ECO:0000247"/>
    <property type="project" value="NTNU_SB"/>
</dbReference>
<dbReference type="GO" id="GO:0005829">
    <property type="term" value="C:cytosol"/>
    <property type="evidence" value="ECO:0000314"/>
    <property type="project" value="HPA"/>
</dbReference>
<dbReference type="GO" id="GO:0005654">
    <property type="term" value="C:nucleoplasm"/>
    <property type="evidence" value="ECO:0000314"/>
    <property type="project" value="HPA"/>
</dbReference>
<dbReference type="GO" id="GO:0003677">
    <property type="term" value="F:DNA binding"/>
    <property type="evidence" value="ECO:0000314"/>
    <property type="project" value="UniProtKB"/>
</dbReference>
<dbReference type="GO" id="GO:0001228">
    <property type="term" value="F:DNA-binding transcription activator activity, RNA polymerase II-specific"/>
    <property type="evidence" value="ECO:0007669"/>
    <property type="project" value="Ensembl"/>
</dbReference>
<dbReference type="GO" id="GO:0000981">
    <property type="term" value="F:DNA-binding transcription factor activity, RNA polymerase II-specific"/>
    <property type="evidence" value="ECO:0000247"/>
    <property type="project" value="NTNU_SB"/>
</dbReference>
<dbReference type="GO" id="GO:0001227">
    <property type="term" value="F:DNA-binding transcription repressor activity, RNA polymerase II-specific"/>
    <property type="evidence" value="ECO:0000314"/>
    <property type="project" value="NTNU_SB"/>
</dbReference>
<dbReference type="GO" id="GO:0000978">
    <property type="term" value="F:RNA polymerase II cis-regulatory region sequence-specific DNA binding"/>
    <property type="evidence" value="ECO:0000314"/>
    <property type="project" value="NTNU_SB"/>
</dbReference>
<dbReference type="GO" id="GO:0008270">
    <property type="term" value="F:zinc ion binding"/>
    <property type="evidence" value="ECO:0000314"/>
    <property type="project" value="UniProtKB"/>
</dbReference>
<dbReference type="GO" id="GO:0008283">
    <property type="term" value="P:cell population proliferation"/>
    <property type="evidence" value="ECO:0007669"/>
    <property type="project" value="Ensembl"/>
</dbReference>
<dbReference type="GO" id="GO:0022900">
    <property type="term" value="P:electron transport chain"/>
    <property type="evidence" value="ECO:0007669"/>
    <property type="project" value="Ensembl"/>
</dbReference>
<dbReference type="GO" id="GO:0043524">
    <property type="term" value="P:negative regulation of neuron apoptotic process"/>
    <property type="evidence" value="ECO:0007669"/>
    <property type="project" value="Ensembl"/>
</dbReference>
<dbReference type="GO" id="GO:0000122">
    <property type="term" value="P:negative regulation of transcription by RNA polymerase II"/>
    <property type="evidence" value="ECO:0000314"/>
    <property type="project" value="NTNU_SB"/>
</dbReference>
<dbReference type="GO" id="GO:0030182">
    <property type="term" value="P:neuron differentiation"/>
    <property type="evidence" value="ECO:0007669"/>
    <property type="project" value="Ensembl"/>
</dbReference>
<dbReference type="GO" id="GO:1903108">
    <property type="term" value="P:regulation of mitochondrial transcription"/>
    <property type="evidence" value="ECO:0007669"/>
    <property type="project" value="Ensembl"/>
</dbReference>
<dbReference type="GO" id="GO:0006357">
    <property type="term" value="P:regulation of transcription by RNA polymerase II"/>
    <property type="evidence" value="ECO:0000318"/>
    <property type="project" value="GO_Central"/>
</dbReference>
<dbReference type="CDD" id="cd22291">
    <property type="entry name" value="cc_THAP11_C"/>
    <property type="match status" value="1"/>
</dbReference>
<dbReference type="InterPro" id="IPR006612">
    <property type="entry name" value="THAP_Znf"/>
</dbReference>
<dbReference type="PANTHER" id="PTHR22794">
    <property type="entry name" value="THAP DOMAIN PROTEIN 11"/>
    <property type="match status" value="1"/>
</dbReference>
<dbReference type="PANTHER" id="PTHR22794:SF2">
    <property type="entry name" value="THAP DOMAIN-CONTAINING PROTEIN 11"/>
    <property type="match status" value="1"/>
</dbReference>
<dbReference type="Pfam" id="PF05485">
    <property type="entry name" value="THAP"/>
    <property type="match status" value="1"/>
</dbReference>
<dbReference type="SMART" id="SM00692">
    <property type="entry name" value="DM3"/>
    <property type="match status" value="1"/>
</dbReference>
<dbReference type="SMART" id="SM00980">
    <property type="entry name" value="THAP"/>
    <property type="match status" value="1"/>
</dbReference>
<dbReference type="SUPFAM" id="SSF57716">
    <property type="entry name" value="Glucocorticoid receptor-like (DNA-binding domain)"/>
    <property type="match status" value="1"/>
</dbReference>
<dbReference type="PROSITE" id="PS50950">
    <property type="entry name" value="ZF_THAP"/>
    <property type="match status" value="1"/>
</dbReference>